<dbReference type="EC" id="2.4.2.7" evidence="1"/>
<dbReference type="EMBL" id="CP000356">
    <property type="protein sequence ID" value="ABF53056.1"/>
    <property type="molecule type" value="Genomic_DNA"/>
</dbReference>
<dbReference type="RefSeq" id="WP_011541638.1">
    <property type="nucleotide sequence ID" value="NC_008048.1"/>
</dbReference>
<dbReference type="SMR" id="Q1GTG6"/>
<dbReference type="STRING" id="317655.Sala_1342"/>
<dbReference type="KEGG" id="sal:Sala_1342"/>
<dbReference type="eggNOG" id="COG0503">
    <property type="taxonomic scope" value="Bacteria"/>
</dbReference>
<dbReference type="HOGENOM" id="CLU_063339_3_0_5"/>
<dbReference type="OrthoDB" id="9803963at2"/>
<dbReference type="UniPathway" id="UPA00588">
    <property type="reaction ID" value="UER00646"/>
</dbReference>
<dbReference type="Proteomes" id="UP000006578">
    <property type="component" value="Chromosome"/>
</dbReference>
<dbReference type="GO" id="GO:0005737">
    <property type="term" value="C:cytoplasm"/>
    <property type="evidence" value="ECO:0007669"/>
    <property type="project" value="UniProtKB-SubCell"/>
</dbReference>
<dbReference type="GO" id="GO:0002055">
    <property type="term" value="F:adenine binding"/>
    <property type="evidence" value="ECO:0007669"/>
    <property type="project" value="TreeGrafter"/>
</dbReference>
<dbReference type="GO" id="GO:0003999">
    <property type="term" value="F:adenine phosphoribosyltransferase activity"/>
    <property type="evidence" value="ECO:0007669"/>
    <property type="project" value="UniProtKB-UniRule"/>
</dbReference>
<dbReference type="GO" id="GO:0016208">
    <property type="term" value="F:AMP binding"/>
    <property type="evidence" value="ECO:0007669"/>
    <property type="project" value="TreeGrafter"/>
</dbReference>
<dbReference type="GO" id="GO:0006168">
    <property type="term" value="P:adenine salvage"/>
    <property type="evidence" value="ECO:0007669"/>
    <property type="project" value="InterPro"/>
</dbReference>
<dbReference type="GO" id="GO:0044209">
    <property type="term" value="P:AMP salvage"/>
    <property type="evidence" value="ECO:0007669"/>
    <property type="project" value="UniProtKB-UniRule"/>
</dbReference>
<dbReference type="GO" id="GO:0006166">
    <property type="term" value="P:purine ribonucleoside salvage"/>
    <property type="evidence" value="ECO:0007669"/>
    <property type="project" value="UniProtKB-KW"/>
</dbReference>
<dbReference type="CDD" id="cd06223">
    <property type="entry name" value="PRTases_typeI"/>
    <property type="match status" value="1"/>
</dbReference>
<dbReference type="FunFam" id="3.40.50.2020:FF:000004">
    <property type="entry name" value="Adenine phosphoribosyltransferase"/>
    <property type="match status" value="1"/>
</dbReference>
<dbReference type="Gene3D" id="3.40.50.2020">
    <property type="match status" value="1"/>
</dbReference>
<dbReference type="HAMAP" id="MF_00004">
    <property type="entry name" value="Aden_phosphoribosyltr"/>
    <property type="match status" value="1"/>
</dbReference>
<dbReference type="InterPro" id="IPR005764">
    <property type="entry name" value="Ade_phspho_trans"/>
</dbReference>
<dbReference type="InterPro" id="IPR000836">
    <property type="entry name" value="PRibTrfase_dom"/>
</dbReference>
<dbReference type="InterPro" id="IPR029057">
    <property type="entry name" value="PRTase-like"/>
</dbReference>
<dbReference type="InterPro" id="IPR050054">
    <property type="entry name" value="UPRTase/APRTase"/>
</dbReference>
<dbReference type="NCBIfam" id="TIGR01090">
    <property type="entry name" value="apt"/>
    <property type="match status" value="1"/>
</dbReference>
<dbReference type="NCBIfam" id="NF002634">
    <property type="entry name" value="PRK02304.1-3"/>
    <property type="match status" value="1"/>
</dbReference>
<dbReference type="NCBIfam" id="NF002636">
    <property type="entry name" value="PRK02304.1-5"/>
    <property type="match status" value="1"/>
</dbReference>
<dbReference type="PANTHER" id="PTHR32315">
    <property type="entry name" value="ADENINE PHOSPHORIBOSYLTRANSFERASE"/>
    <property type="match status" value="1"/>
</dbReference>
<dbReference type="PANTHER" id="PTHR32315:SF3">
    <property type="entry name" value="ADENINE PHOSPHORIBOSYLTRANSFERASE"/>
    <property type="match status" value="1"/>
</dbReference>
<dbReference type="Pfam" id="PF00156">
    <property type="entry name" value="Pribosyltran"/>
    <property type="match status" value="1"/>
</dbReference>
<dbReference type="SUPFAM" id="SSF53271">
    <property type="entry name" value="PRTase-like"/>
    <property type="match status" value="1"/>
</dbReference>
<dbReference type="PROSITE" id="PS00103">
    <property type="entry name" value="PUR_PYR_PR_TRANSFER"/>
    <property type="match status" value="1"/>
</dbReference>
<gene>
    <name evidence="1" type="primary">apt</name>
    <name type="ordered locus">Sala_1342</name>
</gene>
<keyword id="KW-0963">Cytoplasm</keyword>
<keyword id="KW-0328">Glycosyltransferase</keyword>
<keyword id="KW-0660">Purine salvage</keyword>
<keyword id="KW-1185">Reference proteome</keyword>
<keyword id="KW-0808">Transferase</keyword>
<comment type="function">
    <text evidence="1">Catalyzes a salvage reaction resulting in the formation of AMP, that is energically less costly than de novo synthesis.</text>
</comment>
<comment type="catalytic activity">
    <reaction evidence="1">
        <text>AMP + diphosphate = 5-phospho-alpha-D-ribose 1-diphosphate + adenine</text>
        <dbReference type="Rhea" id="RHEA:16609"/>
        <dbReference type="ChEBI" id="CHEBI:16708"/>
        <dbReference type="ChEBI" id="CHEBI:33019"/>
        <dbReference type="ChEBI" id="CHEBI:58017"/>
        <dbReference type="ChEBI" id="CHEBI:456215"/>
        <dbReference type="EC" id="2.4.2.7"/>
    </reaction>
</comment>
<comment type="pathway">
    <text evidence="1">Purine metabolism; AMP biosynthesis via salvage pathway; AMP from adenine: step 1/1.</text>
</comment>
<comment type="subunit">
    <text evidence="1">Homodimer.</text>
</comment>
<comment type="subcellular location">
    <subcellularLocation>
        <location evidence="1">Cytoplasm</location>
    </subcellularLocation>
</comment>
<comment type="similarity">
    <text evidence="1">Belongs to the purine/pyrimidine phosphoribosyltransferase family.</text>
</comment>
<proteinExistence type="inferred from homology"/>
<organism>
    <name type="scientific">Sphingopyxis alaskensis (strain DSM 13593 / LMG 18877 / RB2256)</name>
    <name type="common">Sphingomonas alaskensis</name>
    <dbReference type="NCBI Taxonomy" id="317655"/>
    <lineage>
        <taxon>Bacteria</taxon>
        <taxon>Pseudomonadati</taxon>
        <taxon>Pseudomonadota</taxon>
        <taxon>Alphaproteobacteria</taxon>
        <taxon>Sphingomonadales</taxon>
        <taxon>Sphingomonadaceae</taxon>
        <taxon>Sphingopyxis</taxon>
    </lineage>
</organism>
<feature type="chain" id="PRO_0000321412" description="Adenine phosphoribosyltransferase">
    <location>
        <begin position="1"/>
        <end position="184"/>
    </location>
</feature>
<protein>
    <recommendedName>
        <fullName evidence="1">Adenine phosphoribosyltransferase</fullName>
        <shortName evidence="1">APRT</shortName>
        <ecNumber evidence="1">2.4.2.7</ecNumber>
    </recommendedName>
</protein>
<reference key="1">
    <citation type="journal article" date="2009" name="Proc. Natl. Acad. Sci. U.S.A.">
        <title>The genomic basis of trophic strategy in marine bacteria.</title>
        <authorList>
            <person name="Lauro F.M."/>
            <person name="McDougald D."/>
            <person name="Thomas T."/>
            <person name="Williams T.J."/>
            <person name="Egan S."/>
            <person name="Rice S."/>
            <person name="DeMaere M.Z."/>
            <person name="Ting L."/>
            <person name="Ertan H."/>
            <person name="Johnson J."/>
            <person name="Ferriera S."/>
            <person name="Lapidus A."/>
            <person name="Anderson I."/>
            <person name="Kyrpides N."/>
            <person name="Munk A.C."/>
            <person name="Detter C."/>
            <person name="Han C.S."/>
            <person name="Brown M.V."/>
            <person name="Robb F.T."/>
            <person name="Kjelleberg S."/>
            <person name="Cavicchioli R."/>
        </authorList>
    </citation>
    <scope>NUCLEOTIDE SEQUENCE [LARGE SCALE GENOMIC DNA]</scope>
    <source>
        <strain>DSM 13593 / LMG 18877 / RB2256</strain>
    </source>
</reference>
<accession>Q1GTG6</accession>
<evidence type="ECO:0000255" key="1">
    <source>
        <dbReference type="HAMAP-Rule" id="MF_00004"/>
    </source>
</evidence>
<name>APT_SPHAL</name>
<sequence length="184" mass="19078">MIALPPQPDLDLASLVRTIPDFPRPGIQFRDITTLIGDAVGFAESVRRLSACAAAYRPDLIVAVEARGFLFGAAMATAMGLGVVPVRKAGKLPGVTIGVDYELEYGTDRLELHEGAVLPGHRVVLVDDLLATGGTILATAALMRSVGAEVAAALFVIDLPDLGGSARLGAAGLRCETLIAFNGD</sequence>